<comment type="function">
    <text evidence="1">Single strand-specific metallo-endoribonuclease involved in late-stage 70S ribosome quality control and in maturation of the 3' terminus of the 16S rRNA.</text>
</comment>
<comment type="cofactor">
    <cofactor evidence="1">
        <name>Zn(2+)</name>
        <dbReference type="ChEBI" id="CHEBI:29105"/>
    </cofactor>
    <text evidence="1">Binds 1 zinc ion.</text>
</comment>
<comment type="subcellular location">
    <subcellularLocation>
        <location evidence="1">Cytoplasm</location>
    </subcellularLocation>
</comment>
<comment type="similarity">
    <text evidence="1">Belongs to the endoribonuclease YbeY family.</text>
</comment>
<gene>
    <name evidence="1" type="primary">ybeY</name>
    <name type="ordered locus">spyM18_0515</name>
</gene>
<dbReference type="EC" id="3.1.-.-" evidence="1"/>
<dbReference type="EMBL" id="AE009949">
    <property type="protein sequence ID" value="AAL97232.1"/>
    <property type="molecule type" value="Genomic_DNA"/>
</dbReference>
<dbReference type="RefSeq" id="WP_002985748.1">
    <property type="nucleotide sequence ID" value="NC_003485.1"/>
</dbReference>
<dbReference type="SMR" id="P67142"/>
<dbReference type="GeneID" id="69901291"/>
<dbReference type="KEGG" id="spm:spyM18_0515"/>
<dbReference type="HOGENOM" id="CLU_106710_3_0_9"/>
<dbReference type="GO" id="GO:0005737">
    <property type="term" value="C:cytoplasm"/>
    <property type="evidence" value="ECO:0007669"/>
    <property type="project" value="UniProtKB-SubCell"/>
</dbReference>
<dbReference type="GO" id="GO:0004222">
    <property type="term" value="F:metalloendopeptidase activity"/>
    <property type="evidence" value="ECO:0007669"/>
    <property type="project" value="InterPro"/>
</dbReference>
<dbReference type="GO" id="GO:0004521">
    <property type="term" value="F:RNA endonuclease activity"/>
    <property type="evidence" value="ECO:0007669"/>
    <property type="project" value="UniProtKB-UniRule"/>
</dbReference>
<dbReference type="GO" id="GO:0008270">
    <property type="term" value="F:zinc ion binding"/>
    <property type="evidence" value="ECO:0007669"/>
    <property type="project" value="UniProtKB-UniRule"/>
</dbReference>
<dbReference type="GO" id="GO:0006364">
    <property type="term" value="P:rRNA processing"/>
    <property type="evidence" value="ECO:0007669"/>
    <property type="project" value="UniProtKB-UniRule"/>
</dbReference>
<dbReference type="Gene3D" id="3.40.390.30">
    <property type="entry name" value="Metalloproteases ('zincins'), catalytic domain"/>
    <property type="match status" value="1"/>
</dbReference>
<dbReference type="HAMAP" id="MF_00009">
    <property type="entry name" value="Endoribonucl_YbeY"/>
    <property type="match status" value="1"/>
</dbReference>
<dbReference type="InterPro" id="IPR023091">
    <property type="entry name" value="MetalPrtase_cat_dom_sf_prd"/>
</dbReference>
<dbReference type="InterPro" id="IPR002036">
    <property type="entry name" value="YbeY"/>
</dbReference>
<dbReference type="InterPro" id="IPR020549">
    <property type="entry name" value="YbeY_CS"/>
</dbReference>
<dbReference type="NCBIfam" id="TIGR00043">
    <property type="entry name" value="rRNA maturation RNase YbeY"/>
    <property type="match status" value="1"/>
</dbReference>
<dbReference type="PANTHER" id="PTHR46986">
    <property type="entry name" value="ENDORIBONUCLEASE YBEY, CHLOROPLASTIC"/>
    <property type="match status" value="1"/>
</dbReference>
<dbReference type="PANTHER" id="PTHR46986:SF1">
    <property type="entry name" value="ENDORIBONUCLEASE YBEY, CHLOROPLASTIC"/>
    <property type="match status" value="1"/>
</dbReference>
<dbReference type="Pfam" id="PF02130">
    <property type="entry name" value="YbeY"/>
    <property type="match status" value="1"/>
</dbReference>
<dbReference type="SUPFAM" id="SSF55486">
    <property type="entry name" value="Metalloproteases ('zincins'), catalytic domain"/>
    <property type="match status" value="1"/>
</dbReference>
<dbReference type="PROSITE" id="PS01306">
    <property type="entry name" value="UPF0054"/>
    <property type="match status" value="1"/>
</dbReference>
<feature type="chain" id="PRO_0000102545" description="Endoribonuclease YbeY">
    <location>
        <begin position="1"/>
        <end position="165"/>
    </location>
</feature>
<feature type="binding site" evidence="1">
    <location>
        <position position="130"/>
    </location>
    <ligand>
        <name>Zn(2+)</name>
        <dbReference type="ChEBI" id="CHEBI:29105"/>
        <note>catalytic</note>
    </ligand>
</feature>
<feature type="binding site" evidence="1">
    <location>
        <position position="134"/>
    </location>
    <ligand>
        <name>Zn(2+)</name>
        <dbReference type="ChEBI" id="CHEBI:29105"/>
        <note>catalytic</note>
    </ligand>
</feature>
<feature type="binding site" evidence="1">
    <location>
        <position position="140"/>
    </location>
    <ligand>
        <name>Zn(2+)</name>
        <dbReference type="ChEBI" id="CHEBI:29105"/>
        <note>catalytic</note>
    </ligand>
</feature>
<accession>P67142</accession>
<accession>Q8K8D9</accession>
<accession>Q9A143</accession>
<evidence type="ECO:0000255" key="1">
    <source>
        <dbReference type="HAMAP-Rule" id="MF_00009"/>
    </source>
</evidence>
<keyword id="KW-0963">Cytoplasm</keyword>
<keyword id="KW-0255">Endonuclease</keyword>
<keyword id="KW-0378">Hydrolase</keyword>
<keyword id="KW-0479">Metal-binding</keyword>
<keyword id="KW-0540">Nuclease</keyword>
<keyword id="KW-0690">Ribosome biogenesis</keyword>
<keyword id="KW-0698">rRNA processing</keyword>
<keyword id="KW-0862">Zinc</keyword>
<name>YBEY_STRP8</name>
<protein>
    <recommendedName>
        <fullName evidence="1">Endoribonuclease YbeY</fullName>
        <ecNumber evidence="1">3.1.-.-</ecNumber>
    </recommendedName>
</protein>
<proteinExistence type="inferred from homology"/>
<reference key="1">
    <citation type="journal article" date="2002" name="Proc. Natl. Acad. Sci. U.S.A.">
        <title>Genome sequence and comparative microarray analysis of serotype M18 group A Streptococcus strains associated with acute rheumatic fever outbreaks.</title>
        <authorList>
            <person name="Smoot J.C."/>
            <person name="Barbian K.D."/>
            <person name="Van Gompel J.J."/>
            <person name="Smoot L.M."/>
            <person name="Chaussee M.S."/>
            <person name="Sylva G.L."/>
            <person name="Sturdevant D.E."/>
            <person name="Ricklefs S.M."/>
            <person name="Porcella S.F."/>
            <person name="Parkins L.D."/>
            <person name="Beres S.B."/>
            <person name="Campbell D.S."/>
            <person name="Smith T.M."/>
            <person name="Zhang Q."/>
            <person name="Kapur V."/>
            <person name="Daly J.A."/>
            <person name="Veasy L.G."/>
            <person name="Musser J.M."/>
        </authorList>
    </citation>
    <scope>NUCLEOTIDE SEQUENCE [LARGE SCALE GENOMIC DNA]</scope>
    <source>
        <strain>MGAS8232</strain>
    </source>
</reference>
<organism>
    <name type="scientific">Streptococcus pyogenes serotype M18 (strain MGAS8232)</name>
    <dbReference type="NCBI Taxonomy" id="186103"/>
    <lineage>
        <taxon>Bacteria</taxon>
        <taxon>Bacillati</taxon>
        <taxon>Bacillota</taxon>
        <taxon>Bacilli</taxon>
        <taxon>Lactobacillales</taxon>
        <taxon>Streptococcaceae</taxon>
        <taxon>Streptococcus</taxon>
    </lineage>
</organism>
<sequence>MYIEMIDETGQVSQEIMEQTLDLLNFAAQKTGKEEKEMSVTFVTNERSHELNLEYRDTDRPTDVISLEYKPETPILFSQEDLAADPSLAEMMAEFDAYIGELFISIDKAREQSQEYGHSFEREMGFLAVHGFLHINGYDHYTLEEEKEMFTLQEEILTAYGLTRQ</sequence>